<feature type="chain" id="PRO_0000427966" description="UDP-galactopyranose mutase">
    <location>
        <begin position="1"/>
        <end position="399"/>
    </location>
</feature>
<feature type="binding site" evidence="1">
    <location>
        <position position="18"/>
    </location>
    <ligand>
        <name>FAD</name>
        <dbReference type="ChEBI" id="CHEBI:57692"/>
    </ligand>
</feature>
<feature type="binding site" evidence="1">
    <location>
        <position position="38"/>
    </location>
    <ligand>
        <name>FAD</name>
        <dbReference type="ChEBI" id="CHEBI:57692"/>
    </ligand>
</feature>
<feature type="binding site" evidence="1">
    <location>
        <position position="46"/>
    </location>
    <ligand>
        <name>FAD</name>
        <dbReference type="ChEBI" id="CHEBI:57692"/>
    </ligand>
</feature>
<feature type="binding site" evidence="1">
    <location>
        <position position="66"/>
    </location>
    <ligand>
        <name>FAD</name>
        <dbReference type="ChEBI" id="CHEBI:57692"/>
    </ligand>
</feature>
<feature type="binding site" evidence="1">
    <location>
        <position position="157"/>
    </location>
    <ligand>
        <name>UDP-alpha-D-galactose</name>
        <dbReference type="ChEBI" id="CHEBI:66914"/>
    </ligand>
</feature>
<feature type="binding site" evidence="1">
    <location>
        <position position="162"/>
    </location>
    <ligand>
        <name>UDP-alpha-D-galactose</name>
        <dbReference type="ChEBI" id="CHEBI:66914"/>
    </ligand>
</feature>
<feature type="binding site" evidence="1">
    <location>
        <position position="166"/>
    </location>
    <ligand>
        <name>UDP-alpha-D-galactose</name>
        <dbReference type="ChEBI" id="CHEBI:66914"/>
    </ligand>
</feature>
<feature type="binding site" evidence="1">
    <location>
        <position position="191"/>
    </location>
    <ligand>
        <name>UDP-alpha-D-galactose</name>
        <dbReference type="ChEBI" id="CHEBI:66914"/>
    </ligand>
</feature>
<feature type="binding site" evidence="1">
    <location>
        <begin position="224"/>
        <end position="225"/>
    </location>
    <ligand>
        <name>FAD</name>
        <dbReference type="ChEBI" id="CHEBI:57692"/>
    </ligand>
</feature>
<feature type="binding site" evidence="1">
    <location>
        <position position="282"/>
    </location>
    <ligand>
        <name>UDP-alpha-D-galactose</name>
        <dbReference type="ChEBI" id="CHEBI:66914"/>
    </ligand>
</feature>
<feature type="binding site" evidence="1">
    <location>
        <position position="292"/>
    </location>
    <ligand>
        <name>UDP-alpha-D-galactose</name>
        <dbReference type="ChEBI" id="CHEBI:66914"/>
    </ligand>
</feature>
<feature type="binding site" evidence="1">
    <location>
        <position position="328"/>
    </location>
    <ligand>
        <name>UDP-alpha-D-galactose</name>
        <dbReference type="ChEBI" id="CHEBI:66914"/>
    </ligand>
</feature>
<feature type="binding site" evidence="1">
    <location>
        <position position="360"/>
    </location>
    <ligand>
        <name>FAD</name>
        <dbReference type="ChEBI" id="CHEBI:57692"/>
    </ligand>
</feature>
<feature type="binding site" evidence="1">
    <location>
        <position position="366"/>
    </location>
    <ligand>
        <name>UDP-alpha-D-galactose</name>
        <dbReference type="ChEBI" id="CHEBI:66914"/>
    </ligand>
</feature>
<feature type="binding site" evidence="1">
    <location>
        <begin position="367"/>
        <end position="369"/>
    </location>
    <ligand>
        <name>FAD</name>
        <dbReference type="ChEBI" id="CHEBI:57692"/>
    </ligand>
</feature>
<name>GLF_MYCTO</name>
<proteinExistence type="inferred from homology"/>
<gene>
    <name type="primary">glf</name>
    <name type="ordered locus">MT3916</name>
</gene>
<sequence length="399" mass="45814">MQPMTARFDLFVVGSGFFGLTIAERVATQLDKRVLVLERRPHIGGNAYSEAEPQTGIEVHKYGAHLFHTSNKRVWDYVRQFTDFTDYRHRVFAMHNGQAYQFPMGLGLVSQFFGKYFTPEQARQLIAEQAAEIDTADAQNLEEKAISLIGRPLYEAFVKGYTAKQWQTDPKELPAANITRLPVRYTFDNRYFSDTYEGLPTDGYTAWLQNMAADHRIEVRLNTDWFDVRGQLRPGSPAAPVVYTGPLDRYFDYAEGRLGWRTLDFEVEVLPIGDFQGTAVMNYNDLDVPYTRIHEFRHFHPERDYPTDKTVIMREYSRFAEDDDEPYYPINTEADRALLATYRARAKSETASSKVLFGGRLGTYQYLDMHMAIASALNMYDNVLAPHLRDGVPLLQDGA</sequence>
<evidence type="ECO:0000250" key="1"/>
<evidence type="ECO:0000305" key="2"/>
<comment type="function">
    <text evidence="1">Catalyzes the interconversion through a 2-keto intermediate of uridine diphosphogalactopyranose (UDP-GalP) into uridine diphosphogalactofuranose (UDP-GalF) which is a key building block for cell wall construction in Mycobacterium tuberculosis.</text>
</comment>
<comment type="catalytic activity">
    <reaction>
        <text>UDP-alpha-D-galactose = UDP-alpha-D-galactofuranose</text>
        <dbReference type="Rhea" id="RHEA:24132"/>
        <dbReference type="ChEBI" id="CHEBI:66914"/>
        <dbReference type="ChEBI" id="CHEBI:66915"/>
        <dbReference type="EC" id="5.4.99.9"/>
    </reaction>
</comment>
<comment type="cofactor">
    <cofactor evidence="1">
        <name>FAD</name>
        <dbReference type="ChEBI" id="CHEBI:57692"/>
    </cofactor>
</comment>
<comment type="pathway">
    <text>Cell wall biogenesis; cell wall polysaccharide biosynthesis.</text>
</comment>
<comment type="subunit">
    <text evidence="1">Homotetramer.</text>
</comment>
<comment type="similarity">
    <text evidence="2">Belongs to the UDP-galactopyranose/dTDP-fucopyranose mutase family.</text>
</comment>
<keyword id="KW-0961">Cell wall biogenesis/degradation</keyword>
<keyword id="KW-0274">FAD</keyword>
<keyword id="KW-0285">Flavoprotein</keyword>
<keyword id="KW-0413">Isomerase</keyword>
<keyword id="KW-1185">Reference proteome</keyword>
<accession>P9WIQ0</accession>
<accession>F2GDG8</accession>
<accession>L0TDM1</accession>
<accession>O06934</accession>
<accession>Q7ARQ0</accession>
<accession>Q7D4U3</accession>
<reference key="1">
    <citation type="journal article" date="2002" name="J. Bacteriol.">
        <title>Whole-genome comparison of Mycobacterium tuberculosis clinical and laboratory strains.</title>
        <authorList>
            <person name="Fleischmann R.D."/>
            <person name="Alland D."/>
            <person name="Eisen J.A."/>
            <person name="Carpenter L."/>
            <person name="White O."/>
            <person name="Peterson J.D."/>
            <person name="DeBoy R.T."/>
            <person name="Dodson R.J."/>
            <person name="Gwinn M.L."/>
            <person name="Haft D.H."/>
            <person name="Hickey E.K."/>
            <person name="Kolonay J.F."/>
            <person name="Nelson W.C."/>
            <person name="Umayam L.A."/>
            <person name="Ermolaeva M.D."/>
            <person name="Salzberg S.L."/>
            <person name="Delcher A."/>
            <person name="Utterback T.R."/>
            <person name="Weidman J.F."/>
            <person name="Khouri H.M."/>
            <person name="Gill J."/>
            <person name="Mikula A."/>
            <person name="Bishai W."/>
            <person name="Jacobs W.R. Jr."/>
            <person name="Venter J.C."/>
            <person name="Fraser C.M."/>
        </authorList>
    </citation>
    <scope>NUCLEOTIDE SEQUENCE [LARGE SCALE GENOMIC DNA]</scope>
    <source>
        <strain>CDC 1551 / Oshkosh</strain>
    </source>
</reference>
<dbReference type="EC" id="5.4.99.9"/>
<dbReference type="EMBL" id="AE000516">
    <property type="protein sequence ID" value="AAK48282.1"/>
    <property type="molecule type" value="Genomic_DNA"/>
</dbReference>
<dbReference type="PIR" id="E70888">
    <property type="entry name" value="E70888"/>
</dbReference>
<dbReference type="RefSeq" id="WP_003420798.1">
    <property type="nucleotide sequence ID" value="NZ_KK341227.1"/>
</dbReference>
<dbReference type="SMR" id="P9WIQ0"/>
<dbReference type="KEGG" id="mtc:MT3916"/>
<dbReference type="PATRIC" id="fig|83331.31.peg.4213"/>
<dbReference type="HOGENOM" id="CLU_042118_0_0_11"/>
<dbReference type="UniPathway" id="UPA00963"/>
<dbReference type="Proteomes" id="UP000001020">
    <property type="component" value="Chromosome"/>
</dbReference>
<dbReference type="GO" id="GO:0005829">
    <property type="term" value="C:cytosol"/>
    <property type="evidence" value="ECO:0007669"/>
    <property type="project" value="TreeGrafter"/>
</dbReference>
<dbReference type="GO" id="GO:0050660">
    <property type="term" value="F:flavin adenine dinucleotide binding"/>
    <property type="evidence" value="ECO:0007669"/>
    <property type="project" value="TreeGrafter"/>
</dbReference>
<dbReference type="GO" id="GO:0008767">
    <property type="term" value="F:UDP-galactopyranose mutase activity"/>
    <property type="evidence" value="ECO:0007669"/>
    <property type="project" value="UniProtKB-EC"/>
</dbReference>
<dbReference type="GO" id="GO:0045227">
    <property type="term" value="P:capsule polysaccharide biosynthetic process"/>
    <property type="evidence" value="ECO:0007669"/>
    <property type="project" value="UniProtKB-UniPathway"/>
</dbReference>
<dbReference type="GO" id="GO:0071555">
    <property type="term" value="P:cell wall organization"/>
    <property type="evidence" value="ECO:0007669"/>
    <property type="project" value="UniProtKB-KW"/>
</dbReference>
<dbReference type="FunFam" id="3.40.50.720:FF:000354">
    <property type="entry name" value="UDP-galactopyranose mutase"/>
    <property type="match status" value="1"/>
</dbReference>
<dbReference type="FunFam" id="3.40.50.720:FF:000397">
    <property type="entry name" value="UDP-galactopyranose mutase"/>
    <property type="match status" value="1"/>
</dbReference>
<dbReference type="FunFam" id="3.40.50.720:FF:000422">
    <property type="entry name" value="UDP-galactopyranose mutase"/>
    <property type="match status" value="1"/>
</dbReference>
<dbReference type="Gene3D" id="3.40.50.720">
    <property type="entry name" value="NAD(P)-binding Rossmann-like Domain"/>
    <property type="match status" value="3"/>
</dbReference>
<dbReference type="InterPro" id="IPR004379">
    <property type="entry name" value="UDP-GALP_mutase"/>
</dbReference>
<dbReference type="InterPro" id="IPR015899">
    <property type="entry name" value="UDP-GalPyranose_mutase_C"/>
</dbReference>
<dbReference type="NCBIfam" id="TIGR00031">
    <property type="entry name" value="UDP-GALP_mutase"/>
    <property type="match status" value="1"/>
</dbReference>
<dbReference type="PANTHER" id="PTHR21197">
    <property type="entry name" value="UDP-GALACTOPYRANOSE MUTASE"/>
    <property type="match status" value="1"/>
</dbReference>
<dbReference type="PANTHER" id="PTHR21197:SF0">
    <property type="entry name" value="UDP-GALACTOPYRANOSE MUTASE"/>
    <property type="match status" value="1"/>
</dbReference>
<dbReference type="Pfam" id="PF03275">
    <property type="entry name" value="GLF"/>
    <property type="match status" value="1"/>
</dbReference>
<dbReference type="Pfam" id="PF13450">
    <property type="entry name" value="NAD_binding_8"/>
    <property type="match status" value="1"/>
</dbReference>
<dbReference type="SUPFAM" id="SSF54373">
    <property type="entry name" value="FAD-linked reductases, C-terminal domain"/>
    <property type="match status" value="1"/>
</dbReference>
<dbReference type="SUPFAM" id="SSF51971">
    <property type="entry name" value="Nucleotide-binding domain"/>
    <property type="match status" value="1"/>
</dbReference>
<organism>
    <name type="scientific">Mycobacterium tuberculosis (strain CDC 1551 / Oshkosh)</name>
    <dbReference type="NCBI Taxonomy" id="83331"/>
    <lineage>
        <taxon>Bacteria</taxon>
        <taxon>Bacillati</taxon>
        <taxon>Actinomycetota</taxon>
        <taxon>Actinomycetes</taxon>
        <taxon>Mycobacteriales</taxon>
        <taxon>Mycobacteriaceae</taxon>
        <taxon>Mycobacterium</taxon>
        <taxon>Mycobacterium tuberculosis complex</taxon>
    </lineage>
</organism>
<protein>
    <recommendedName>
        <fullName>UDP-galactopyranose mutase</fullName>
        <shortName>UGM</shortName>
        <ecNumber>5.4.99.9</ecNumber>
    </recommendedName>
    <alternativeName>
        <fullName>UDP-GALP mutase</fullName>
    </alternativeName>
    <alternativeName>
        <fullName>Uridine 5-diphosphate galactopyranose mutase</fullName>
    </alternativeName>
</protein>